<sequence length="467" mass="52727">MSKFPTVSEILSGKVAVGEEVAVRGWVRTRRDSKAGLSFLAVYDGSCFDPIQSIINNDLANYNDEVLRLTAGCSVIVTGKVVESPAEGQAVELHATHVEVVGWVEDPDTYPMAAKRHSIEYLREVAHLRPRTNLIGAVARVRHCLAQAIHRFFNEQGFYWVATPLITASDTEGAGEMFRVSTLDLENLPRTEEGKVDFSQDFFGKESFLTVSGQLNGETYACALSKVYTFGPTFRAENSNTTRHLAEFWMVEPEFAFATLADNAKLAEDMLKYVFKAVLEERKDDMQFFAKHIDKDVITRLENFIAAPFAQVDYTDAIEILLKSGKEFEFPVSWGIDLSSEHERFLAEEYFKSPVVVKNYPKDIKAFYMRLNDDGKTVAAMDVLAPGIGEIIGGSQREERLDVLDTRMVEMGLNPEDYWWYRDLRKYGTVPHSGFGLGFERLIVYVTGLQNIREVIPFPRAPRNANF</sequence>
<gene>
    <name evidence="1" type="primary">asnS</name>
    <name type="ordered locus">APL_0675</name>
</gene>
<comment type="catalytic activity">
    <reaction evidence="1">
        <text>tRNA(Asn) + L-asparagine + ATP = L-asparaginyl-tRNA(Asn) + AMP + diphosphate + H(+)</text>
        <dbReference type="Rhea" id="RHEA:11180"/>
        <dbReference type="Rhea" id="RHEA-COMP:9659"/>
        <dbReference type="Rhea" id="RHEA-COMP:9674"/>
        <dbReference type="ChEBI" id="CHEBI:15378"/>
        <dbReference type="ChEBI" id="CHEBI:30616"/>
        <dbReference type="ChEBI" id="CHEBI:33019"/>
        <dbReference type="ChEBI" id="CHEBI:58048"/>
        <dbReference type="ChEBI" id="CHEBI:78442"/>
        <dbReference type="ChEBI" id="CHEBI:78515"/>
        <dbReference type="ChEBI" id="CHEBI:456215"/>
        <dbReference type="EC" id="6.1.1.22"/>
    </reaction>
</comment>
<comment type="subunit">
    <text evidence="1">Homodimer.</text>
</comment>
<comment type="subcellular location">
    <subcellularLocation>
        <location evidence="1">Cytoplasm</location>
    </subcellularLocation>
</comment>
<comment type="similarity">
    <text evidence="1">Belongs to the class-II aminoacyl-tRNA synthetase family.</text>
</comment>
<feature type="chain" id="PRO_1000051373" description="Asparagine--tRNA ligase">
    <location>
        <begin position="1"/>
        <end position="467"/>
    </location>
</feature>
<protein>
    <recommendedName>
        <fullName evidence="1">Asparagine--tRNA ligase</fullName>
        <ecNumber evidence="1">6.1.1.22</ecNumber>
    </recommendedName>
    <alternativeName>
        <fullName evidence="1">Asparaginyl-tRNA synthetase</fullName>
        <shortName evidence="1">AsnRS</shortName>
    </alternativeName>
</protein>
<keyword id="KW-0030">Aminoacyl-tRNA synthetase</keyword>
<keyword id="KW-0067">ATP-binding</keyword>
<keyword id="KW-0963">Cytoplasm</keyword>
<keyword id="KW-0436">Ligase</keyword>
<keyword id="KW-0547">Nucleotide-binding</keyword>
<keyword id="KW-0648">Protein biosynthesis</keyword>
<keyword id="KW-1185">Reference proteome</keyword>
<evidence type="ECO:0000255" key="1">
    <source>
        <dbReference type="HAMAP-Rule" id="MF_00534"/>
    </source>
</evidence>
<proteinExistence type="inferred from homology"/>
<accession>A3N039</accession>
<organism>
    <name type="scientific">Actinobacillus pleuropneumoniae serotype 5b (strain L20)</name>
    <dbReference type="NCBI Taxonomy" id="416269"/>
    <lineage>
        <taxon>Bacteria</taxon>
        <taxon>Pseudomonadati</taxon>
        <taxon>Pseudomonadota</taxon>
        <taxon>Gammaproteobacteria</taxon>
        <taxon>Pasteurellales</taxon>
        <taxon>Pasteurellaceae</taxon>
        <taxon>Actinobacillus</taxon>
    </lineage>
</organism>
<name>SYN_ACTP2</name>
<reference key="1">
    <citation type="journal article" date="2008" name="J. Bacteriol.">
        <title>The complete genome sequence of Actinobacillus pleuropneumoniae L20 (serotype 5b).</title>
        <authorList>
            <person name="Foote S.J."/>
            <person name="Bosse J.T."/>
            <person name="Bouevitch A.B."/>
            <person name="Langford P.R."/>
            <person name="Young N.M."/>
            <person name="Nash J.H.E."/>
        </authorList>
    </citation>
    <scope>NUCLEOTIDE SEQUENCE [LARGE SCALE GENOMIC DNA]</scope>
    <source>
        <strain>L20</strain>
    </source>
</reference>
<dbReference type="EC" id="6.1.1.22" evidence="1"/>
<dbReference type="EMBL" id="CP000569">
    <property type="protein sequence ID" value="ABN73775.1"/>
    <property type="molecule type" value="Genomic_DNA"/>
</dbReference>
<dbReference type="RefSeq" id="WP_005617159.1">
    <property type="nucleotide sequence ID" value="NC_009053.1"/>
</dbReference>
<dbReference type="SMR" id="A3N039"/>
<dbReference type="STRING" id="416269.APL_0675"/>
<dbReference type="EnsemblBacteria" id="ABN73775">
    <property type="protein sequence ID" value="ABN73775"/>
    <property type="gene ID" value="APL_0675"/>
</dbReference>
<dbReference type="KEGG" id="apl:APL_0675"/>
<dbReference type="eggNOG" id="COG0017">
    <property type="taxonomic scope" value="Bacteria"/>
</dbReference>
<dbReference type="HOGENOM" id="CLU_004553_2_0_6"/>
<dbReference type="Proteomes" id="UP000001432">
    <property type="component" value="Chromosome"/>
</dbReference>
<dbReference type="GO" id="GO:0005737">
    <property type="term" value="C:cytoplasm"/>
    <property type="evidence" value="ECO:0007669"/>
    <property type="project" value="UniProtKB-SubCell"/>
</dbReference>
<dbReference type="GO" id="GO:0004816">
    <property type="term" value="F:asparagine-tRNA ligase activity"/>
    <property type="evidence" value="ECO:0007669"/>
    <property type="project" value="UniProtKB-UniRule"/>
</dbReference>
<dbReference type="GO" id="GO:0005524">
    <property type="term" value="F:ATP binding"/>
    <property type="evidence" value="ECO:0007669"/>
    <property type="project" value="UniProtKB-UniRule"/>
</dbReference>
<dbReference type="GO" id="GO:0003676">
    <property type="term" value="F:nucleic acid binding"/>
    <property type="evidence" value="ECO:0007669"/>
    <property type="project" value="InterPro"/>
</dbReference>
<dbReference type="GO" id="GO:0006421">
    <property type="term" value="P:asparaginyl-tRNA aminoacylation"/>
    <property type="evidence" value="ECO:0007669"/>
    <property type="project" value="UniProtKB-UniRule"/>
</dbReference>
<dbReference type="CDD" id="cd00776">
    <property type="entry name" value="AsxRS_core"/>
    <property type="match status" value="1"/>
</dbReference>
<dbReference type="CDD" id="cd04318">
    <property type="entry name" value="EcAsnRS_like_N"/>
    <property type="match status" value="1"/>
</dbReference>
<dbReference type="FunFam" id="3.30.930.10:FF:000016">
    <property type="entry name" value="Asparagine--tRNA ligase"/>
    <property type="match status" value="1"/>
</dbReference>
<dbReference type="Gene3D" id="3.30.930.10">
    <property type="entry name" value="Bira Bifunctional Protein, Domain 2"/>
    <property type="match status" value="1"/>
</dbReference>
<dbReference type="Gene3D" id="2.40.50.140">
    <property type="entry name" value="Nucleic acid-binding proteins"/>
    <property type="match status" value="1"/>
</dbReference>
<dbReference type="HAMAP" id="MF_00534">
    <property type="entry name" value="Asn_tRNA_synth"/>
    <property type="match status" value="1"/>
</dbReference>
<dbReference type="InterPro" id="IPR004364">
    <property type="entry name" value="Aa-tRNA-synt_II"/>
</dbReference>
<dbReference type="InterPro" id="IPR006195">
    <property type="entry name" value="aa-tRNA-synth_II"/>
</dbReference>
<dbReference type="InterPro" id="IPR045864">
    <property type="entry name" value="aa-tRNA-synth_II/BPL/LPL"/>
</dbReference>
<dbReference type="InterPro" id="IPR004522">
    <property type="entry name" value="Asn-tRNA-ligase"/>
</dbReference>
<dbReference type="InterPro" id="IPR002312">
    <property type="entry name" value="Asp/Asn-tRNA-synth_IIb"/>
</dbReference>
<dbReference type="InterPro" id="IPR012340">
    <property type="entry name" value="NA-bd_OB-fold"/>
</dbReference>
<dbReference type="InterPro" id="IPR004365">
    <property type="entry name" value="NA-bd_OB_tRNA"/>
</dbReference>
<dbReference type="NCBIfam" id="TIGR00457">
    <property type="entry name" value="asnS"/>
    <property type="match status" value="1"/>
</dbReference>
<dbReference type="NCBIfam" id="NF003037">
    <property type="entry name" value="PRK03932.1"/>
    <property type="match status" value="1"/>
</dbReference>
<dbReference type="PANTHER" id="PTHR22594:SF34">
    <property type="entry name" value="ASPARAGINE--TRNA LIGASE, MITOCHONDRIAL-RELATED"/>
    <property type="match status" value="1"/>
</dbReference>
<dbReference type="PANTHER" id="PTHR22594">
    <property type="entry name" value="ASPARTYL/LYSYL-TRNA SYNTHETASE"/>
    <property type="match status" value="1"/>
</dbReference>
<dbReference type="Pfam" id="PF00152">
    <property type="entry name" value="tRNA-synt_2"/>
    <property type="match status" value="1"/>
</dbReference>
<dbReference type="Pfam" id="PF01336">
    <property type="entry name" value="tRNA_anti-codon"/>
    <property type="match status" value="1"/>
</dbReference>
<dbReference type="PRINTS" id="PR01042">
    <property type="entry name" value="TRNASYNTHASP"/>
</dbReference>
<dbReference type="SUPFAM" id="SSF55681">
    <property type="entry name" value="Class II aaRS and biotin synthetases"/>
    <property type="match status" value="1"/>
</dbReference>
<dbReference type="SUPFAM" id="SSF50249">
    <property type="entry name" value="Nucleic acid-binding proteins"/>
    <property type="match status" value="1"/>
</dbReference>
<dbReference type="PROSITE" id="PS50862">
    <property type="entry name" value="AA_TRNA_LIGASE_II"/>
    <property type="match status" value="1"/>
</dbReference>